<sequence length="222" mass="25729">MSHLVKMENGQSQTIQEMLGCIERYNPDHLKILESYVQDQAKNNTYDLEANLAVLKLYQFNPHMLNFDITYTILLKCLTNLPHTDFVMAKCLLLPQQMKDENVQTIIDLADILERADFTLFWQRAEVNRTMFRHISGFHDSIRKFVSHVVGITFQTIKKDLLKELLGGIEDSTLESWIKRNGWKHQGQDLVVVATQDDKIKTKNITEKIEFENVGALMAQCI</sequence>
<gene>
    <name type="ORF">GI20605</name>
</gene>
<dbReference type="EMBL" id="CH933808">
    <property type="protein sequence ID" value="EDW09618.1"/>
    <property type="molecule type" value="Genomic_DNA"/>
</dbReference>
<dbReference type="SMR" id="B4KTN5"/>
<dbReference type="FunCoup" id="B4KTN5">
    <property type="interactions" value="1903"/>
</dbReference>
<dbReference type="EnsemblMetazoa" id="FBtr0171330">
    <property type="protein sequence ID" value="FBpp0169822"/>
    <property type="gene ID" value="FBgn0143340"/>
</dbReference>
<dbReference type="EnsemblMetazoa" id="XM_002005647.4">
    <property type="protein sequence ID" value="XP_002005683.1"/>
    <property type="gene ID" value="LOC6579806"/>
</dbReference>
<dbReference type="GeneID" id="6579806"/>
<dbReference type="KEGG" id="dmo:Dmoj_GI20605"/>
<dbReference type="CTD" id="27335"/>
<dbReference type="eggNOG" id="KOG3252">
    <property type="taxonomic scope" value="Eukaryota"/>
</dbReference>
<dbReference type="HOGENOM" id="CLU_076723_1_0_1"/>
<dbReference type="InParanoid" id="B4KTN5"/>
<dbReference type="OMA" id="WKHQGQG"/>
<dbReference type="OrthoDB" id="337745at2759"/>
<dbReference type="PhylomeDB" id="B4KTN5"/>
<dbReference type="Proteomes" id="UP000009192">
    <property type="component" value="Unassembled WGS sequence"/>
</dbReference>
<dbReference type="GO" id="GO:0016282">
    <property type="term" value="C:eukaryotic 43S preinitiation complex"/>
    <property type="evidence" value="ECO:0007669"/>
    <property type="project" value="UniProtKB-UniRule"/>
</dbReference>
<dbReference type="GO" id="GO:0033290">
    <property type="term" value="C:eukaryotic 48S preinitiation complex"/>
    <property type="evidence" value="ECO:0007669"/>
    <property type="project" value="UniProtKB-UniRule"/>
</dbReference>
<dbReference type="GO" id="GO:0005852">
    <property type="term" value="C:eukaryotic translation initiation factor 3 complex"/>
    <property type="evidence" value="ECO:0007669"/>
    <property type="project" value="UniProtKB-UniRule"/>
</dbReference>
<dbReference type="GO" id="GO:0043022">
    <property type="term" value="F:ribosome binding"/>
    <property type="evidence" value="ECO:0007669"/>
    <property type="project" value="InterPro"/>
</dbReference>
<dbReference type="GO" id="GO:0003723">
    <property type="term" value="F:RNA binding"/>
    <property type="evidence" value="ECO:0007669"/>
    <property type="project" value="UniProtKB-UniRule"/>
</dbReference>
<dbReference type="GO" id="GO:0003743">
    <property type="term" value="F:translation initiation factor activity"/>
    <property type="evidence" value="ECO:0007669"/>
    <property type="project" value="UniProtKB-UniRule"/>
</dbReference>
<dbReference type="GO" id="GO:0001732">
    <property type="term" value="P:formation of cytoplasmic translation initiation complex"/>
    <property type="evidence" value="ECO:0007669"/>
    <property type="project" value="UniProtKB-UniRule"/>
</dbReference>
<dbReference type="GO" id="GO:0006446">
    <property type="term" value="P:regulation of translational initiation"/>
    <property type="evidence" value="ECO:0007669"/>
    <property type="project" value="InterPro"/>
</dbReference>
<dbReference type="FunFam" id="1.10.10.10:FF:000212">
    <property type="entry name" value="Eukaryotic translation initiation factor 3 subunit K"/>
    <property type="match status" value="1"/>
</dbReference>
<dbReference type="FunFam" id="1.25.40.250:FF:000001">
    <property type="entry name" value="Eukaryotic translation initiation factor 3 subunit K"/>
    <property type="match status" value="1"/>
</dbReference>
<dbReference type="Gene3D" id="1.25.40.250">
    <property type="entry name" value="ARM repeat, domain 1"/>
    <property type="match status" value="1"/>
</dbReference>
<dbReference type="Gene3D" id="1.10.10.10">
    <property type="entry name" value="Winged helix-like DNA-binding domain superfamily/Winged helix DNA-binding domain"/>
    <property type="match status" value="1"/>
</dbReference>
<dbReference type="HAMAP" id="MF_03010">
    <property type="entry name" value="eIF3k"/>
    <property type="match status" value="1"/>
</dbReference>
<dbReference type="InterPro" id="IPR016024">
    <property type="entry name" value="ARM-type_fold"/>
</dbReference>
<dbReference type="InterPro" id="IPR033464">
    <property type="entry name" value="CSN8_PSD8_EIF3K"/>
</dbReference>
<dbReference type="InterPro" id="IPR009374">
    <property type="entry name" value="eIF3k"/>
</dbReference>
<dbReference type="InterPro" id="IPR000717">
    <property type="entry name" value="PCI_dom"/>
</dbReference>
<dbReference type="InterPro" id="IPR016020">
    <property type="entry name" value="Transl_init_fac_sub12_N_euk"/>
</dbReference>
<dbReference type="InterPro" id="IPR036388">
    <property type="entry name" value="WH-like_DNA-bd_sf"/>
</dbReference>
<dbReference type="InterPro" id="IPR036390">
    <property type="entry name" value="WH_DNA-bd_sf"/>
</dbReference>
<dbReference type="PANTHER" id="PTHR13022">
    <property type="entry name" value="EUKARYOTIC TRANSLATION INITIATION FACTOR 3 SUBUNIT 11"/>
    <property type="match status" value="1"/>
</dbReference>
<dbReference type="PANTHER" id="PTHR13022:SF0">
    <property type="entry name" value="EUKARYOTIC TRANSLATION INITIATION FACTOR 3 SUBUNIT K"/>
    <property type="match status" value="1"/>
</dbReference>
<dbReference type="Pfam" id="PF10075">
    <property type="entry name" value="CSN8_PSD8_EIF3K"/>
    <property type="match status" value="1"/>
</dbReference>
<dbReference type="SUPFAM" id="SSF48371">
    <property type="entry name" value="ARM repeat"/>
    <property type="match status" value="1"/>
</dbReference>
<dbReference type="SUPFAM" id="SSF46785">
    <property type="entry name" value="Winged helix' DNA-binding domain"/>
    <property type="match status" value="1"/>
</dbReference>
<dbReference type="PROSITE" id="PS50250">
    <property type="entry name" value="PCI"/>
    <property type="match status" value="1"/>
</dbReference>
<protein>
    <recommendedName>
        <fullName evidence="1">Eukaryotic translation initiation factor 3 subunit K</fullName>
        <shortName evidence="1">eIF3k</shortName>
    </recommendedName>
    <alternativeName>
        <fullName evidence="1">eIF-3 p25</fullName>
    </alternativeName>
</protein>
<feature type="chain" id="PRO_0000365043" description="Eukaryotic translation initiation factor 3 subunit K">
    <location>
        <begin position="1"/>
        <end position="222"/>
    </location>
</feature>
<feature type="domain" description="PCI" evidence="2">
    <location>
        <begin position="46"/>
        <end position="208"/>
    </location>
</feature>
<keyword id="KW-0963">Cytoplasm</keyword>
<keyword id="KW-0396">Initiation factor</keyword>
<keyword id="KW-0648">Protein biosynthesis</keyword>
<keyword id="KW-1185">Reference proteome</keyword>
<accession>B4KTN5</accession>
<evidence type="ECO:0000255" key="1">
    <source>
        <dbReference type="HAMAP-Rule" id="MF_03010"/>
    </source>
</evidence>
<evidence type="ECO:0000255" key="2">
    <source>
        <dbReference type="PROSITE-ProRule" id="PRU01185"/>
    </source>
</evidence>
<reference key="1">
    <citation type="journal article" date="2007" name="Nature">
        <title>Evolution of genes and genomes on the Drosophila phylogeny.</title>
        <authorList>
            <consortium name="Drosophila 12 genomes consortium"/>
        </authorList>
    </citation>
    <scope>NUCLEOTIDE SEQUENCE [LARGE SCALE GENOMIC DNA]</scope>
    <source>
        <strain>Tucson 15081-1352.22</strain>
    </source>
</reference>
<proteinExistence type="inferred from homology"/>
<comment type="function">
    <text evidence="1">Component of the eukaryotic translation initiation factor 3 (eIF-3) complex, which is involved in protein synthesis of a specialized repertoire of mRNAs and, together with other initiation factors, stimulates binding of mRNA and methionyl-tRNAi to the 40S ribosome. The eIF-3 complex specifically targets and initiates translation of a subset of mRNAs involved in cell proliferation.</text>
</comment>
<comment type="subunit">
    <text evidence="1">Component of the eukaryotic translation initiation factor 3 (eIF-3) complex. The eIF-3 complex interacts with pix.</text>
</comment>
<comment type="subcellular location">
    <subcellularLocation>
        <location evidence="1">Cytoplasm</location>
    </subcellularLocation>
</comment>
<comment type="similarity">
    <text evidence="1">Belongs to the eIF-3 subunit K family.</text>
</comment>
<name>EIF3K_DROMO</name>
<organism>
    <name type="scientific">Drosophila mojavensis</name>
    <name type="common">Fruit fly</name>
    <dbReference type="NCBI Taxonomy" id="7230"/>
    <lineage>
        <taxon>Eukaryota</taxon>
        <taxon>Metazoa</taxon>
        <taxon>Ecdysozoa</taxon>
        <taxon>Arthropoda</taxon>
        <taxon>Hexapoda</taxon>
        <taxon>Insecta</taxon>
        <taxon>Pterygota</taxon>
        <taxon>Neoptera</taxon>
        <taxon>Endopterygota</taxon>
        <taxon>Diptera</taxon>
        <taxon>Brachycera</taxon>
        <taxon>Muscomorpha</taxon>
        <taxon>Ephydroidea</taxon>
        <taxon>Drosophilidae</taxon>
        <taxon>Drosophila</taxon>
    </lineage>
</organism>